<evidence type="ECO:0000255" key="1">
    <source>
        <dbReference type="HAMAP-Rule" id="MF_00289"/>
    </source>
</evidence>
<gene>
    <name evidence="1" type="primary">psmA</name>
    <name type="ordered locus">Mbar_A2503</name>
</gene>
<organism>
    <name type="scientific">Methanosarcina barkeri (strain Fusaro / DSM 804)</name>
    <dbReference type="NCBI Taxonomy" id="269797"/>
    <lineage>
        <taxon>Archaea</taxon>
        <taxon>Methanobacteriati</taxon>
        <taxon>Methanobacteriota</taxon>
        <taxon>Stenosarchaea group</taxon>
        <taxon>Methanomicrobia</taxon>
        <taxon>Methanosarcinales</taxon>
        <taxon>Methanosarcinaceae</taxon>
        <taxon>Methanosarcina</taxon>
    </lineage>
</organism>
<proteinExistence type="inferred from homology"/>
<protein>
    <recommendedName>
        <fullName evidence="1">Proteasome subunit alpha</fullName>
    </recommendedName>
    <alternativeName>
        <fullName evidence="1">20S proteasome alpha subunit</fullName>
    </alternativeName>
    <alternativeName>
        <fullName evidence="1">Proteasome core protein PsmA</fullName>
    </alternativeName>
</protein>
<name>PSA_METBF</name>
<accession>Q469M6</accession>
<reference key="1">
    <citation type="journal article" date="2006" name="J. Bacteriol.">
        <title>The Methanosarcina barkeri genome: comparative analysis with Methanosarcina acetivorans and Methanosarcina mazei reveals extensive rearrangement within methanosarcinal genomes.</title>
        <authorList>
            <person name="Maeder D.L."/>
            <person name="Anderson I."/>
            <person name="Brettin T.S."/>
            <person name="Bruce D.C."/>
            <person name="Gilna P."/>
            <person name="Han C.S."/>
            <person name="Lapidus A."/>
            <person name="Metcalf W.W."/>
            <person name="Saunders E."/>
            <person name="Tapia R."/>
            <person name="Sowers K.R."/>
        </authorList>
    </citation>
    <scope>NUCLEOTIDE SEQUENCE [LARGE SCALE GENOMIC DNA]</scope>
    <source>
        <strain>Fusaro / DSM 804</strain>
    </source>
</reference>
<dbReference type="EMBL" id="CP000099">
    <property type="protein sequence ID" value="AAZ71416.1"/>
    <property type="molecule type" value="Genomic_DNA"/>
</dbReference>
<dbReference type="SMR" id="Q469M6"/>
<dbReference type="STRING" id="269797.Mbar_A2503"/>
<dbReference type="PaxDb" id="269797-Mbar_A2503"/>
<dbReference type="KEGG" id="mba:Mbar_A2503"/>
<dbReference type="eggNOG" id="arCOG00971">
    <property type="taxonomic scope" value="Archaea"/>
</dbReference>
<dbReference type="HOGENOM" id="CLU_035750_4_1_2"/>
<dbReference type="OrthoDB" id="9421at2157"/>
<dbReference type="GO" id="GO:0005737">
    <property type="term" value="C:cytoplasm"/>
    <property type="evidence" value="ECO:0007669"/>
    <property type="project" value="UniProtKB-SubCell"/>
</dbReference>
<dbReference type="GO" id="GO:0019773">
    <property type="term" value="C:proteasome core complex, alpha-subunit complex"/>
    <property type="evidence" value="ECO:0000250"/>
    <property type="project" value="UniProtKB"/>
</dbReference>
<dbReference type="GO" id="GO:0004298">
    <property type="term" value="F:threonine-type endopeptidase activity"/>
    <property type="evidence" value="ECO:0007669"/>
    <property type="project" value="InterPro"/>
</dbReference>
<dbReference type="GO" id="GO:0010498">
    <property type="term" value="P:proteasomal protein catabolic process"/>
    <property type="evidence" value="ECO:0007669"/>
    <property type="project" value="UniProtKB-UniRule"/>
</dbReference>
<dbReference type="GO" id="GO:0006511">
    <property type="term" value="P:ubiquitin-dependent protein catabolic process"/>
    <property type="evidence" value="ECO:0007669"/>
    <property type="project" value="InterPro"/>
</dbReference>
<dbReference type="CDD" id="cd03756">
    <property type="entry name" value="proteasome_alpha_archeal"/>
    <property type="match status" value="1"/>
</dbReference>
<dbReference type="FunFam" id="3.60.20.10:FF:000004">
    <property type="entry name" value="Proteasome subunit alpha type-4"/>
    <property type="match status" value="1"/>
</dbReference>
<dbReference type="Gene3D" id="3.60.20.10">
    <property type="entry name" value="Glutamine Phosphoribosylpyrophosphate, subunit 1, domain 1"/>
    <property type="match status" value="1"/>
</dbReference>
<dbReference type="HAMAP" id="MF_00289_A">
    <property type="entry name" value="Proteasome_A_A"/>
    <property type="match status" value="1"/>
</dbReference>
<dbReference type="InterPro" id="IPR029055">
    <property type="entry name" value="Ntn_hydrolases_N"/>
</dbReference>
<dbReference type="InterPro" id="IPR050115">
    <property type="entry name" value="Proteasome_alpha"/>
</dbReference>
<dbReference type="InterPro" id="IPR023332">
    <property type="entry name" value="Proteasome_alpha-type"/>
</dbReference>
<dbReference type="InterPro" id="IPR019982">
    <property type="entry name" value="Proteasome_asu_arc"/>
</dbReference>
<dbReference type="InterPro" id="IPR000426">
    <property type="entry name" value="Proteasome_asu_N"/>
</dbReference>
<dbReference type="InterPro" id="IPR001353">
    <property type="entry name" value="Proteasome_sua/b"/>
</dbReference>
<dbReference type="NCBIfam" id="TIGR03633">
    <property type="entry name" value="arc_protsome_A"/>
    <property type="match status" value="1"/>
</dbReference>
<dbReference type="NCBIfam" id="NF003075">
    <property type="entry name" value="PRK03996.1"/>
    <property type="match status" value="1"/>
</dbReference>
<dbReference type="PANTHER" id="PTHR11599">
    <property type="entry name" value="PROTEASOME SUBUNIT ALPHA/BETA"/>
    <property type="match status" value="1"/>
</dbReference>
<dbReference type="Pfam" id="PF00227">
    <property type="entry name" value="Proteasome"/>
    <property type="match status" value="1"/>
</dbReference>
<dbReference type="Pfam" id="PF10584">
    <property type="entry name" value="Proteasome_A_N"/>
    <property type="match status" value="1"/>
</dbReference>
<dbReference type="SMART" id="SM00948">
    <property type="entry name" value="Proteasome_A_N"/>
    <property type="match status" value="1"/>
</dbReference>
<dbReference type="SUPFAM" id="SSF56235">
    <property type="entry name" value="N-terminal nucleophile aminohydrolases (Ntn hydrolases)"/>
    <property type="match status" value="1"/>
</dbReference>
<dbReference type="PROSITE" id="PS00388">
    <property type="entry name" value="PROTEASOME_ALPHA_1"/>
    <property type="match status" value="1"/>
</dbReference>
<dbReference type="PROSITE" id="PS51475">
    <property type="entry name" value="PROTEASOME_ALPHA_2"/>
    <property type="match status" value="1"/>
</dbReference>
<keyword id="KW-0963">Cytoplasm</keyword>
<keyword id="KW-0647">Proteasome</keyword>
<feature type="chain" id="PRO_1000021787" description="Proteasome subunit alpha">
    <location>
        <begin position="1"/>
        <end position="249"/>
    </location>
</feature>
<comment type="function">
    <text evidence="1">Component of the proteasome core, a large protease complex with broad specificity involved in protein degradation.</text>
</comment>
<comment type="activity regulation">
    <text evidence="1">The formation of the proteasomal ATPase PAN-20S proteasome complex, via the docking of the C-termini of PAN into the intersubunit pockets in the alpha-rings, triggers opening of the gate for substrate entry. Interconversion between the open-gate and close-gate conformations leads to a dynamic regulation of the 20S proteasome proteolysis activity.</text>
</comment>
<comment type="subunit">
    <text evidence="1">The 20S proteasome core is composed of 14 alpha and 14 beta subunits that assemble into four stacked heptameric rings, resulting in a barrel-shaped structure. The two inner rings, each composed of seven catalytic beta subunits, are sandwiched by two outer rings, each composed of seven alpha subunits. The catalytic chamber with the active sites is on the inside of the barrel. Has a gated structure, the ends of the cylinder being occluded by the N-termini of the alpha-subunits. Is capped at one or both ends by the proteasome regulatory ATPase, PAN.</text>
</comment>
<comment type="subcellular location">
    <subcellularLocation>
        <location evidence="1">Cytoplasm</location>
    </subcellularLocation>
</comment>
<comment type="similarity">
    <text evidence="1">Belongs to the peptidase T1A family.</text>
</comment>
<sequence>MQMAPQMGYDRAITVFSPDGRLFQVEYAREAVKRGTTAVGIKAADGVVLLVDKRITSRLVEAESIEKIFQIDDHIGAATSGLVADARSLVDRARVEAQVNRVSYDEPIGVEVISKKICDHKQTYTQYGGVRPYGTALLIAGVDDNLPRLFETDPSGALLEYKATAIGAGRNAVVEVFEAEYRQDMNMDAAILLGMDALYRAAEGKFDASTLEVGIVSLQDKKFRKLVPEEVENYVQQILEKHKETENKE</sequence>